<gene>
    <name evidence="7" type="primary">MDR4</name>
    <name type="ORF">TEQG_08364</name>
</gene>
<sequence length="1379" mass="149598">MAVEEKNSPTGAAMTNTGILVPSSQQSLPEWWTKTQKFFSRENTITPTFGYFRLLFGTQPGKTDIALIVIGTIAGIGAGIPFPLLGILFGELVDDLNSSTCSTTQAPPGGYQAAITTKVLQVIYVSILNFVCMYIHTGCWSMVGERLVRRLRTKYFHSLLRQEIAFTDTLPSGDVTSRLVSDIEVIQAGTSEKVGLFIGTISYFVAAYIVAFLKVATIAAMLMSVVPIYFLMAFGGGHYIKKYSGRISTHINAATSIVSSSLSHMSIVHAFNANARLEALFAQHLVSARMDALKKAITHSIQFGMLYFVAYASNALAFWQGSRMIADLAEGKPSKVSVGAVYTVIFVLLDASFVLSQMAPFMHIFASAASAGDRLMTTIKRQSAIDGTSSEGDSTISLASEEIELQDVTFNYPARPEVPVLQGVSFKIPPNKHTAIVGTSGSGKSTVVALLERLYDPITGCVRVGNRDLKEINVRHLRGSIGLVQQEPNLLDRSILENIAHGLVSSSQEKHKHLLPTLLGPSLSELTEKIRQGASEDEAVTEQGDVVREIVNLTRHAATLSNAIDFINALPDGLATRVGSSGAELSGGQKQRIALARALIRDPPVLLLDEATAALDSTSERLIQAALNKVSENVTTVSIAHRLATAKDADNIIVMQKGRVMEQGTHMDLVARDGVYAGMVRLQNIGKFSSSSSIMTESTQVDANIDRSLTTDTLLNKEEKLSLEQGVLDEKEKPAQLYMPEEADSLPTEPENEKEKPKQTLWATMKGSFPLIRPNILLISLGLITSIMIGVSYTGEAVIFGHTVGSLSVCRGGPSIRSSGMLFGLLFFILAIVKFAAVIVNGAAFGWAAEKTLYRTRVLSLRSLLRQPLEWHNADGRTPGLLVALVTSDASALSSLTGTTIGVLFSTVANLFAGVILSHVIAWRIAVVLLATLPVLLASGVLRLRVMAQYQKKHQKAYAKATAITVESVDNIKSIAAFSLEQEAYSVFNRSLKAPYKSNMKSVLHGNFWLSLAYSISTLVYALAYWWGSQQILAGMYTQVQFFIVLPALLFSTQSCGQMFALVPDISKARIAASNIVDLLSIKHEGDEEYDKTGSKASAKHTDPRFNMLEDKPRDVEAQLITTTPPSFPTKGMGVQFRNVHFRYPSRPNQPALDDLSINISPGQFCALVGPSGSGKSTTFALLEKFYNPASGSIIIDGVDITKQSGAAFRDTIALVPQENVMFEGTVAFNIGLGARPDVEATQEEIEEACRLANIHDTIAALPDGYNTVCSQDGKQFSGGQRQRLSIARALVRKPRLLLLDESTSALDVESEKHVQDALAKVARKTTIVAIAHRLNTIHRADRIFMIEGGRCVDQGTHAELVERCESYRANVIHQSLDA</sequence>
<dbReference type="EMBL" id="DS995803">
    <property type="protein sequence ID" value="EGE09384.1"/>
    <property type="molecule type" value="Genomic_DNA"/>
</dbReference>
<dbReference type="SMR" id="F2Q5G0"/>
<dbReference type="GlyCosmos" id="F2Q5G0">
    <property type="glycosylation" value="4 sites, No reported glycans"/>
</dbReference>
<dbReference type="VEuPathDB" id="FungiDB:TEQG_08364"/>
<dbReference type="eggNOG" id="KOG0055">
    <property type="taxonomic scope" value="Eukaryota"/>
</dbReference>
<dbReference type="HOGENOM" id="CLU_000604_17_2_1"/>
<dbReference type="OrthoDB" id="4324at34384"/>
<dbReference type="Proteomes" id="UP000009169">
    <property type="component" value="Unassembled WGS sequence"/>
</dbReference>
<dbReference type="GO" id="GO:0005743">
    <property type="term" value="C:mitochondrial inner membrane"/>
    <property type="evidence" value="ECO:0007669"/>
    <property type="project" value="TreeGrafter"/>
</dbReference>
<dbReference type="GO" id="GO:0005886">
    <property type="term" value="C:plasma membrane"/>
    <property type="evidence" value="ECO:0007669"/>
    <property type="project" value="UniProtKB-SubCell"/>
</dbReference>
<dbReference type="GO" id="GO:0015421">
    <property type="term" value="F:ABC-type oligopeptide transporter activity"/>
    <property type="evidence" value="ECO:0007669"/>
    <property type="project" value="TreeGrafter"/>
</dbReference>
<dbReference type="GO" id="GO:0005524">
    <property type="term" value="F:ATP binding"/>
    <property type="evidence" value="ECO:0007669"/>
    <property type="project" value="UniProtKB-KW"/>
</dbReference>
<dbReference type="GO" id="GO:0016887">
    <property type="term" value="F:ATP hydrolysis activity"/>
    <property type="evidence" value="ECO:0007669"/>
    <property type="project" value="InterPro"/>
</dbReference>
<dbReference type="GO" id="GO:0090374">
    <property type="term" value="P:oligopeptide export from mitochondrion"/>
    <property type="evidence" value="ECO:0007669"/>
    <property type="project" value="TreeGrafter"/>
</dbReference>
<dbReference type="CDD" id="cd18577">
    <property type="entry name" value="ABC_6TM_Pgp_ABCB1_D1_like"/>
    <property type="match status" value="1"/>
</dbReference>
<dbReference type="CDD" id="cd18578">
    <property type="entry name" value="ABC_6TM_Pgp_ABCB1_D2_like"/>
    <property type="match status" value="1"/>
</dbReference>
<dbReference type="FunFam" id="1.20.1560.10:FF:000057">
    <property type="entry name" value="ABC multidrug transporter SitT"/>
    <property type="match status" value="1"/>
</dbReference>
<dbReference type="FunFam" id="3.40.50.300:FF:000913">
    <property type="entry name" value="ABC multidrug transporter SitT"/>
    <property type="match status" value="1"/>
</dbReference>
<dbReference type="Gene3D" id="1.20.1560.10">
    <property type="entry name" value="ABC transporter type 1, transmembrane domain"/>
    <property type="match status" value="2"/>
</dbReference>
<dbReference type="Gene3D" id="3.40.50.300">
    <property type="entry name" value="P-loop containing nucleotide triphosphate hydrolases"/>
    <property type="match status" value="2"/>
</dbReference>
<dbReference type="InterPro" id="IPR003593">
    <property type="entry name" value="AAA+_ATPase"/>
</dbReference>
<dbReference type="InterPro" id="IPR011527">
    <property type="entry name" value="ABC1_TM_dom"/>
</dbReference>
<dbReference type="InterPro" id="IPR036640">
    <property type="entry name" value="ABC1_TM_sf"/>
</dbReference>
<dbReference type="InterPro" id="IPR003439">
    <property type="entry name" value="ABC_transporter-like_ATP-bd"/>
</dbReference>
<dbReference type="InterPro" id="IPR017871">
    <property type="entry name" value="ABC_transporter-like_CS"/>
</dbReference>
<dbReference type="InterPro" id="IPR027417">
    <property type="entry name" value="P-loop_NTPase"/>
</dbReference>
<dbReference type="InterPro" id="IPR039421">
    <property type="entry name" value="Type_1_exporter"/>
</dbReference>
<dbReference type="PANTHER" id="PTHR43394:SF11">
    <property type="entry name" value="ATP-BINDING CASSETTE TRANSPORTER"/>
    <property type="match status" value="1"/>
</dbReference>
<dbReference type="PANTHER" id="PTHR43394">
    <property type="entry name" value="ATP-DEPENDENT PERMEASE MDL1, MITOCHONDRIAL"/>
    <property type="match status" value="1"/>
</dbReference>
<dbReference type="Pfam" id="PF00664">
    <property type="entry name" value="ABC_membrane"/>
    <property type="match status" value="2"/>
</dbReference>
<dbReference type="Pfam" id="PF00005">
    <property type="entry name" value="ABC_tran"/>
    <property type="match status" value="2"/>
</dbReference>
<dbReference type="SMART" id="SM00382">
    <property type="entry name" value="AAA"/>
    <property type="match status" value="2"/>
</dbReference>
<dbReference type="SUPFAM" id="SSF90123">
    <property type="entry name" value="ABC transporter transmembrane region"/>
    <property type="match status" value="2"/>
</dbReference>
<dbReference type="SUPFAM" id="SSF52540">
    <property type="entry name" value="P-loop containing nucleoside triphosphate hydrolases"/>
    <property type="match status" value="2"/>
</dbReference>
<dbReference type="PROSITE" id="PS50929">
    <property type="entry name" value="ABC_TM1F"/>
    <property type="match status" value="2"/>
</dbReference>
<dbReference type="PROSITE" id="PS00211">
    <property type="entry name" value="ABC_TRANSPORTER_1"/>
    <property type="match status" value="2"/>
</dbReference>
<dbReference type="PROSITE" id="PS50893">
    <property type="entry name" value="ABC_TRANSPORTER_2"/>
    <property type="match status" value="2"/>
</dbReference>
<comment type="function">
    <text evidence="8">Pleiotropic ABC efflux transporter that may be involved in the modulation susceptibility to a wide range of unrelated cytotoxic compounds.</text>
</comment>
<comment type="subcellular location">
    <subcellularLocation>
        <location evidence="8">Cell membrane</location>
        <topology evidence="1">Multi-pass membrane protein</topology>
    </subcellularLocation>
</comment>
<comment type="induction">
    <text evidence="6">Expression is induced upon exposure to amphotericin B, the allylamine terbinafine, and the azole itraconazole.</text>
</comment>
<comment type="similarity">
    <text evidence="8">Belongs to the ABC transporter superfamily. ABCB family. Multidrug resistance exporter (TC 3.A.1.201) subfamily.</text>
</comment>
<name>MDR4_TRIEC</name>
<evidence type="ECO:0000255" key="1"/>
<evidence type="ECO:0000255" key="2">
    <source>
        <dbReference type="PROSITE-ProRule" id="PRU00434"/>
    </source>
</evidence>
<evidence type="ECO:0000255" key="3">
    <source>
        <dbReference type="PROSITE-ProRule" id="PRU00441"/>
    </source>
</evidence>
<evidence type="ECO:0000255" key="4">
    <source>
        <dbReference type="PROSITE-ProRule" id="PRU00498"/>
    </source>
</evidence>
<evidence type="ECO:0000256" key="5">
    <source>
        <dbReference type="SAM" id="MobiDB-lite"/>
    </source>
</evidence>
<evidence type="ECO:0000269" key="6">
    <source>
    </source>
</evidence>
<evidence type="ECO:0000303" key="7">
    <source>
    </source>
</evidence>
<evidence type="ECO:0000305" key="8"/>
<feature type="chain" id="PRO_0000447184" description="ABC multidrug transporter MDR2">
    <location>
        <begin position="1"/>
        <end position="1379"/>
    </location>
</feature>
<feature type="transmembrane region" description="Helical" evidence="1 3">
    <location>
        <begin position="65"/>
        <end position="85"/>
    </location>
</feature>
<feature type="transmembrane region" description="Helical" evidence="1 3">
    <location>
        <begin position="119"/>
        <end position="139"/>
    </location>
</feature>
<feature type="transmembrane region" description="Helical" evidence="1 3">
    <location>
        <begin position="193"/>
        <end position="213"/>
    </location>
</feature>
<feature type="transmembrane region" description="Helical" evidence="1 3">
    <location>
        <begin position="215"/>
        <end position="235"/>
    </location>
</feature>
<feature type="transmembrane region" description="Helical" evidence="1 3">
    <location>
        <begin position="301"/>
        <end position="321"/>
    </location>
</feature>
<feature type="transmembrane region" description="Helical" evidence="1 3">
    <location>
        <begin position="336"/>
        <end position="356"/>
    </location>
</feature>
<feature type="transmembrane region" description="Helical" evidence="1 3">
    <location>
        <begin position="781"/>
        <end position="801"/>
    </location>
</feature>
<feature type="transmembrane region" description="Helical" evidence="1 3">
    <location>
        <begin position="820"/>
        <end position="840"/>
    </location>
</feature>
<feature type="transmembrane region" description="Helical" evidence="1 3">
    <location>
        <begin position="901"/>
        <end position="921"/>
    </location>
</feature>
<feature type="transmembrane region" description="Helical" evidence="1 3">
    <location>
        <begin position="922"/>
        <end position="942"/>
    </location>
</feature>
<feature type="transmembrane region" description="Helical" evidence="1 3">
    <location>
        <begin position="1008"/>
        <end position="1028"/>
    </location>
</feature>
<feature type="transmembrane region" description="Helical" evidence="1 3">
    <location>
        <begin position="1032"/>
        <end position="1052"/>
    </location>
</feature>
<feature type="domain" description="ABC transmembrane type-1 1" evidence="3">
    <location>
        <begin position="69"/>
        <end position="367"/>
    </location>
</feature>
<feature type="domain" description="ABC transporter 1" evidence="2">
    <location>
        <begin position="403"/>
        <end position="682"/>
    </location>
</feature>
<feature type="domain" description="ABC transmembrane type-1 2" evidence="3">
    <location>
        <begin position="781"/>
        <end position="1068"/>
    </location>
</feature>
<feature type="domain" description="ABC transporter 2" evidence="2">
    <location>
        <begin position="1135"/>
        <end position="1374"/>
    </location>
</feature>
<feature type="region of interest" description="Disordered" evidence="5">
    <location>
        <begin position="738"/>
        <end position="758"/>
    </location>
</feature>
<feature type="binding site" evidence="2">
    <location>
        <begin position="438"/>
        <end position="445"/>
    </location>
    <ligand>
        <name>ATP</name>
        <dbReference type="ChEBI" id="CHEBI:30616"/>
    </ligand>
</feature>
<feature type="binding site" evidence="2">
    <location>
        <begin position="1170"/>
        <end position="1177"/>
    </location>
    <ligand>
        <name>ATP</name>
        <dbReference type="ChEBI" id="CHEBI:30616"/>
    </ligand>
</feature>
<feature type="glycosylation site" description="N-linked (GlcNAc...) asparagine" evidence="4">
    <location>
        <position position="97"/>
    </location>
</feature>
<feature type="glycosylation site" description="N-linked (GlcNAc...) asparagine" evidence="4">
    <location>
        <position position="552"/>
    </location>
</feature>
<feature type="glycosylation site" description="N-linked (GlcNAc...) asparagine" evidence="4">
    <location>
        <position position="633"/>
    </location>
</feature>
<feature type="glycosylation site" description="N-linked (GlcNAc...) asparagine" evidence="4">
    <location>
        <position position="989"/>
    </location>
</feature>
<proteinExistence type="evidence at transcript level"/>
<reference key="1">
    <citation type="journal article" date="2012" name="MBio">
        <title>Comparative genome analysis of Trichophyton rubrum and related dermatophytes reveals candidate genes involved in infection.</title>
        <authorList>
            <person name="Martinez D.A."/>
            <person name="Oliver B.G."/>
            <person name="Graeser Y."/>
            <person name="Goldberg J.M."/>
            <person name="Li W."/>
            <person name="Martinez-Rossi N.M."/>
            <person name="Monod M."/>
            <person name="Shelest E."/>
            <person name="Barton R.C."/>
            <person name="Birch E."/>
            <person name="Brakhage A.A."/>
            <person name="Chen Z."/>
            <person name="Gurr S.J."/>
            <person name="Heiman D."/>
            <person name="Heitman J."/>
            <person name="Kosti I."/>
            <person name="Rossi A."/>
            <person name="Saif S."/>
            <person name="Samalova M."/>
            <person name="Saunders C.W."/>
            <person name="Shea T."/>
            <person name="Summerbell R.C."/>
            <person name="Xu J."/>
            <person name="Young S."/>
            <person name="Zeng Q."/>
            <person name="Birren B.W."/>
            <person name="Cuomo C.A."/>
            <person name="White T.C."/>
        </authorList>
    </citation>
    <scope>NUCLEOTIDE SEQUENCE [LARGE SCALE GENOMIC DNA]</scope>
    <source>
        <strain>ATCC MYA-4606 / CBS 127.97</strain>
    </source>
</reference>
<reference key="2">
    <citation type="journal article" date="2016" name="J. Med. Microbiol.">
        <title>Compensatory expression of multidrug-resistance genes encoding ABC transporters in dermatophytes.</title>
        <authorList>
            <person name="Martins M.P."/>
            <person name="Franceschini A.C.C."/>
            <person name="Jacob T.R."/>
            <person name="Rossi A."/>
            <person name="Martinez-Rossi N.M."/>
        </authorList>
    </citation>
    <scope>INDUCTION</scope>
</reference>
<accession>F2Q5G0</accession>
<organism>
    <name type="scientific">Trichophyton equinum (strain ATCC MYA-4606 / CBS 127.97)</name>
    <name type="common">Horse ringworm fungus</name>
    <dbReference type="NCBI Taxonomy" id="559882"/>
    <lineage>
        <taxon>Eukaryota</taxon>
        <taxon>Fungi</taxon>
        <taxon>Dikarya</taxon>
        <taxon>Ascomycota</taxon>
        <taxon>Pezizomycotina</taxon>
        <taxon>Eurotiomycetes</taxon>
        <taxon>Eurotiomycetidae</taxon>
        <taxon>Onygenales</taxon>
        <taxon>Arthrodermataceae</taxon>
        <taxon>Trichophyton</taxon>
    </lineage>
</organism>
<keyword id="KW-0067">ATP-binding</keyword>
<keyword id="KW-1003">Cell membrane</keyword>
<keyword id="KW-0325">Glycoprotein</keyword>
<keyword id="KW-0472">Membrane</keyword>
<keyword id="KW-0547">Nucleotide-binding</keyword>
<keyword id="KW-0677">Repeat</keyword>
<keyword id="KW-0812">Transmembrane</keyword>
<keyword id="KW-1133">Transmembrane helix</keyword>
<keyword id="KW-0813">Transport</keyword>
<protein>
    <recommendedName>
        <fullName evidence="7">ABC multidrug transporter MDR2</fullName>
    </recommendedName>
    <alternativeName>
        <fullName evidence="7">Multidrug resistance protein 2</fullName>
    </alternativeName>
</protein>